<comment type="function">
    <text evidence="2">Cupin-domain-containing oxidoreductase; part of the gene cluster that mediates the biosynthesis of virensols and trichoxide, fungal natural products that contain or are derived from a salicylaldehyde core (PubMed:31790246). The pathway begins with the synthesis of the reduced chain in virensol C by the highly reducing polyketide synthase virA via condensation of one acetate and 8 malonate units (PubMed:31790246). VirA has interesting programming rules since the first 2 ketides are fully reduced, the 3 following ketides undergo beta-dehydration, and the last 3 ketides are only reduced to beta-hydroxys to yield the trihydroxy portion (PubMed:31790246). The production of aldehyde virensol C by virA alone is surprising, since virA does not contain a reductase (R) domain that is typically associated with reductive product release in HRPKS (PubMed:31790246). The cupin-domain enzyme virC is involved in enhancing virA product turnover (PubMed:31790246). The short-chain dehydrogenase virB then oxidizes the C-7 alcohol of virensol C to a ketone, yielding virensol D (PubMed:31790246). Virensol D is further transformed to salicylaldehyde 5-deoxyaurocitrin by the short-chain dehydrogenase virD (PubMed:31790246). VirD catalyzes the dehydrogenation of C-3 to form the beta-ketone aldehyde, which is followed by the generation of the nucleophilic C-2 that is required for the intramolecular aldol condensation between C-2 and C-7, itself followed by dehydration and aromatization which leads to salicylaldehyde 5-deoxyaurocitrin (PubMed:31790246). While the dehydrogenation of virensol D is definitely catalyzed by virD, the aldol condensation and dehydration may be uncatalyzed or assisted by virD (PubMed:31790246). The short chain dehydrogenase virG then converts salicylaldehyde 5-deoxyaurocitrin into virensol B which is further hydroxylated by the cytochrome P450 monooxygenase virE to yield the hydroquinone virensol A (PubMed:31790246). VirI then may oxidize virensol A to form the quinone, while virH performs the epoxidation (PubMed:31790246). Finally, the two remaining short-chain dehydrogenases, virK and virL, are probably responsible for reducing the ketones to the corresponding alcohols to furnish the epoxycyclohexanol structure in trichoxide (PubMed:31790246).</text>
</comment>
<comment type="pathway">
    <text evidence="2">Secondary metabolite biosynthesis.</text>
</comment>
<comment type="similarity">
    <text evidence="4">Belongs to the virC family.</text>
</comment>
<organism>
    <name type="scientific">Hypocrea virens (strain Gv29-8 / FGSC 10586)</name>
    <name type="common">Gliocladium virens</name>
    <name type="synonym">Trichoderma virens</name>
    <dbReference type="NCBI Taxonomy" id="413071"/>
    <lineage>
        <taxon>Eukaryota</taxon>
        <taxon>Fungi</taxon>
        <taxon>Dikarya</taxon>
        <taxon>Ascomycota</taxon>
        <taxon>Pezizomycotina</taxon>
        <taxon>Sordariomycetes</taxon>
        <taxon>Hypocreomycetidae</taxon>
        <taxon>Hypocreales</taxon>
        <taxon>Hypocreaceae</taxon>
        <taxon>Trichoderma</taxon>
    </lineage>
</organism>
<reference key="1">
    <citation type="journal article" date="2011" name="Genome Biol.">
        <title>Comparative genome sequence analysis underscores mycoparasitism as the ancestral life style of Trichoderma.</title>
        <authorList>
            <person name="Kubicek C.P."/>
            <person name="Herrera-Estrella A."/>
            <person name="Seidl-Seiboth V."/>
            <person name="Martinez D.A."/>
            <person name="Druzhinina I.S."/>
            <person name="Thon M."/>
            <person name="Zeilinger S."/>
            <person name="Casas-Flores S."/>
            <person name="Horwitz B.A."/>
            <person name="Mukherjee P.K."/>
            <person name="Mukherjee M."/>
            <person name="Kredics L."/>
            <person name="Alcaraz L.D."/>
            <person name="Aerts A."/>
            <person name="Antal Z."/>
            <person name="Atanasova L."/>
            <person name="Cervantes-Badillo M.G."/>
            <person name="Challacombe J."/>
            <person name="Chertkov O."/>
            <person name="McCluskey K."/>
            <person name="Coulpier F."/>
            <person name="Deshpande N."/>
            <person name="von Doehren H."/>
            <person name="Ebbole D.J."/>
            <person name="Esquivel-Naranjo E.U."/>
            <person name="Fekete E."/>
            <person name="Flipphi M."/>
            <person name="Glaser F."/>
            <person name="Gomez-Rodriguez E.Y."/>
            <person name="Gruber S."/>
            <person name="Han C."/>
            <person name="Henrissat B."/>
            <person name="Hermosa R."/>
            <person name="Hernandez-Onate M."/>
            <person name="Karaffa L."/>
            <person name="Kosti I."/>
            <person name="Le Crom S."/>
            <person name="Lindquist E."/>
            <person name="Lucas S."/>
            <person name="Luebeck M."/>
            <person name="Luebeck P.S."/>
            <person name="Margeot A."/>
            <person name="Metz B."/>
            <person name="Misra M."/>
            <person name="Nevalainen H."/>
            <person name="Omann M."/>
            <person name="Packer N."/>
            <person name="Perrone G."/>
            <person name="Uresti-Rivera E.E."/>
            <person name="Salamov A."/>
            <person name="Schmoll M."/>
            <person name="Seiboth B."/>
            <person name="Shapiro H."/>
            <person name="Sukno S."/>
            <person name="Tamayo-Ramos J.A."/>
            <person name="Tisch D."/>
            <person name="Wiest A."/>
            <person name="Wilkinson H.H."/>
            <person name="Zhang M."/>
            <person name="Coutinho P.M."/>
            <person name="Kenerley C.M."/>
            <person name="Monte E."/>
            <person name="Baker S.E."/>
            <person name="Grigoriev I.V."/>
        </authorList>
    </citation>
    <scope>NUCLEOTIDE SEQUENCE [LARGE SCALE GENOMIC DNA]</scope>
    <source>
        <strain>Gv29-8 / FGSC 10586</strain>
    </source>
</reference>
<reference key="2">
    <citation type="journal article" date="2019" name="J. Am. Chem. Soc.">
        <title>Fungal highly reducing polyketide synthases biosynthesize salicylaldehydes that are precursors to epoxycyclohexenol natural products.</title>
        <authorList>
            <person name="Liu L."/>
            <person name="Tang M.C."/>
            <person name="Tang Y."/>
        </authorList>
    </citation>
    <scope>FUNCTION</scope>
    <scope>PATHWAY</scope>
</reference>
<feature type="chain" id="PRO_0000449289" description="Cupin-domain-containing oxidoreductase virC">
    <location>
        <begin position="1"/>
        <end position="194"/>
    </location>
</feature>
<feature type="domain" description="Cupin type-2" evidence="1">
    <location>
        <begin position="106"/>
        <end position="175"/>
    </location>
</feature>
<keyword id="KW-0560">Oxidoreductase</keyword>
<keyword id="KW-1185">Reference proteome</keyword>
<accession>G9N4B0</accession>
<evidence type="ECO:0000255" key="1"/>
<evidence type="ECO:0000269" key="2">
    <source>
    </source>
</evidence>
<evidence type="ECO:0000303" key="3">
    <source>
    </source>
</evidence>
<evidence type="ECO:0000305" key="4"/>
<evidence type="ECO:0000305" key="5">
    <source>
    </source>
</evidence>
<sequence>MADQQQNPQESELLLTSAGYVSTFPAPGLRRTVRHITGHNAEGKGVFIQTDCGDHHRIIGNEQALANIIYSTKETPVEMNGDVDLKYAKENEPPLHIHNGSVCRMIDFAPNVISPMHRAVSLDYGIVIEGEFKLILDSGESRIMRQGDVSVQRASAHQWHNITGNGTLPGRMMWVLLDCKPIVINDIDFMECSQ</sequence>
<gene>
    <name evidence="3" type="primary">virC</name>
    <name type="ORF">TRIVIDRAFT_194203</name>
</gene>
<proteinExistence type="inferred from homology"/>
<dbReference type="EC" id="1.-.-.-" evidence="5"/>
<dbReference type="EMBL" id="ABDF02000086">
    <property type="protein sequence ID" value="EHK18436.1"/>
    <property type="molecule type" value="Genomic_DNA"/>
</dbReference>
<dbReference type="RefSeq" id="XP_013952636.1">
    <property type="nucleotide sequence ID" value="XM_014097161.1"/>
</dbReference>
<dbReference type="SMR" id="G9N4B0"/>
<dbReference type="STRING" id="413071.G9N4B0"/>
<dbReference type="EnsemblFungi" id="EHK18436">
    <property type="protein sequence ID" value="EHK18436"/>
    <property type="gene ID" value="TRIVIDRAFT_194203"/>
</dbReference>
<dbReference type="GeneID" id="25789802"/>
<dbReference type="VEuPathDB" id="FungiDB:TRIVIDRAFT_194203"/>
<dbReference type="eggNOG" id="ENOG502SKGF">
    <property type="taxonomic scope" value="Eukaryota"/>
</dbReference>
<dbReference type="HOGENOM" id="CLU_096188_0_2_1"/>
<dbReference type="InParanoid" id="G9N4B0"/>
<dbReference type="OMA" id="HRAMTID"/>
<dbReference type="OrthoDB" id="5840532at2759"/>
<dbReference type="Proteomes" id="UP000007115">
    <property type="component" value="Unassembled WGS sequence"/>
</dbReference>
<dbReference type="GO" id="GO:0016491">
    <property type="term" value="F:oxidoreductase activity"/>
    <property type="evidence" value="ECO:0007669"/>
    <property type="project" value="UniProtKB-KW"/>
</dbReference>
<dbReference type="CDD" id="cd02231">
    <property type="entry name" value="cupin_BLL6423-like"/>
    <property type="match status" value="1"/>
</dbReference>
<dbReference type="Gene3D" id="2.60.120.10">
    <property type="entry name" value="Jelly Rolls"/>
    <property type="match status" value="1"/>
</dbReference>
<dbReference type="InterPro" id="IPR013096">
    <property type="entry name" value="Cupin_2"/>
</dbReference>
<dbReference type="InterPro" id="IPR047142">
    <property type="entry name" value="OryJ/VirC-like"/>
</dbReference>
<dbReference type="InterPro" id="IPR014710">
    <property type="entry name" value="RmlC-like_jellyroll"/>
</dbReference>
<dbReference type="InterPro" id="IPR011051">
    <property type="entry name" value="RmlC_Cupin_sf"/>
</dbReference>
<dbReference type="PANTHER" id="PTHR36156:SF2">
    <property type="entry name" value="CUPIN TYPE-2 DOMAIN-CONTAINING PROTEIN"/>
    <property type="match status" value="1"/>
</dbReference>
<dbReference type="PANTHER" id="PTHR36156">
    <property type="entry name" value="SLR2101 PROTEIN"/>
    <property type="match status" value="1"/>
</dbReference>
<dbReference type="Pfam" id="PF07883">
    <property type="entry name" value="Cupin_2"/>
    <property type="match status" value="1"/>
</dbReference>
<dbReference type="SUPFAM" id="SSF51182">
    <property type="entry name" value="RmlC-like cupins"/>
    <property type="match status" value="1"/>
</dbReference>
<name>VIRC_HYPVG</name>
<protein>
    <recommendedName>
        <fullName evidence="3">Cupin-domain-containing oxidoreductase virC</fullName>
        <ecNumber evidence="5">1.-.-.-</ecNumber>
    </recommendedName>
    <alternativeName>
        <fullName evidence="3">Trichoxide biosynthesis protein virC</fullName>
    </alternativeName>
    <alternativeName>
        <fullName evidence="3">Virensol biosynthesis cluster protein C</fullName>
    </alternativeName>
</protein>